<name>Y557_WOLPM</name>
<gene>
    <name type="ordered locus">WD_0557</name>
</gene>
<reference key="1">
    <citation type="journal article" date="2004" name="PLoS Biol.">
        <title>Phylogenomics of the reproductive parasite Wolbachia pipientis wMel: a streamlined genome overrun by mobile genetic elements.</title>
        <authorList>
            <person name="Wu M."/>
            <person name="Sun L.V."/>
            <person name="Vamathevan J.J."/>
            <person name="Riegler M."/>
            <person name="DeBoy R.T."/>
            <person name="Brownlie J.C."/>
            <person name="McGraw E.A."/>
            <person name="Martin W."/>
            <person name="Esser C."/>
            <person name="Ahmadinejad N."/>
            <person name="Wiegand C."/>
            <person name="Madupu R."/>
            <person name="Beanan M.J."/>
            <person name="Brinkac L.M."/>
            <person name="Daugherty S.C."/>
            <person name="Durkin A.S."/>
            <person name="Kolonay J.F."/>
            <person name="Nelson W.C."/>
            <person name="Mohamoud Y."/>
            <person name="Lee P."/>
            <person name="Berry K.J."/>
            <person name="Young M.B."/>
            <person name="Utterback T.R."/>
            <person name="Weidman J.F."/>
            <person name="Nierman W.C."/>
            <person name="Paulsen I.T."/>
            <person name="Nelson K.E."/>
            <person name="Tettelin H."/>
            <person name="O'Neill S.L."/>
            <person name="Eisen J.A."/>
        </authorList>
    </citation>
    <scope>NUCLEOTIDE SEQUENCE [LARGE SCALE GENOMIC DNA]</scope>
</reference>
<sequence length="88" mass="10579">MEDTVKITAEELKGYIERIEKLEQEKRDVQDHIRDVYAKAADEGWDIKVMKQIIRLRKMDDDDREEQEILLDTYKRALGMSYEEELSE</sequence>
<protein>
    <recommendedName>
        <fullName evidence="1">UPF0335 protein WD_0557</fullName>
    </recommendedName>
</protein>
<accession>Q73HK1</accession>
<proteinExistence type="inferred from homology"/>
<feature type="chain" id="PRO_0000219933" description="UPF0335 protein WD_0557">
    <location>
        <begin position="1"/>
        <end position="88"/>
    </location>
</feature>
<evidence type="ECO:0000255" key="1">
    <source>
        <dbReference type="HAMAP-Rule" id="MF_00797"/>
    </source>
</evidence>
<organism>
    <name type="scientific">Wolbachia pipientis wMel</name>
    <dbReference type="NCBI Taxonomy" id="163164"/>
    <lineage>
        <taxon>Bacteria</taxon>
        <taxon>Pseudomonadati</taxon>
        <taxon>Pseudomonadota</taxon>
        <taxon>Alphaproteobacteria</taxon>
        <taxon>Rickettsiales</taxon>
        <taxon>Anaplasmataceae</taxon>
        <taxon>Wolbachieae</taxon>
        <taxon>Wolbachia</taxon>
    </lineage>
</organism>
<comment type="similarity">
    <text evidence="1">Belongs to the UPF0335 family.</text>
</comment>
<dbReference type="EMBL" id="AE017196">
    <property type="protein sequence ID" value="AAS14264.1"/>
    <property type="molecule type" value="Genomic_DNA"/>
</dbReference>
<dbReference type="RefSeq" id="WP_010082293.1">
    <property type="nucleotide sequence ID" value="NZ_OX384529.1"/>
</dbReference>
<dbReference type="SMR" id="Q73HK1"/>
<dbReference type="EnsemblBacteria" id="AAS14264">
    <property type="protein sequence ID" value="AAS14264"/>
    <property type="gene ID" value="WD_0557"/>
</dbReference>
<dbReference type="KEGG" id="wol:WD_0557"/>
<dbReference type="eggNOG" id="COG3750">
    <property type="taxonomic scope" value="Bacteria"/>
</dbReference>
<dbReference type="Proteomes" id="UP000008215">
    <property type="component" value="Chromosome"/>
</dbReference>
<dbReference type="GO" id="GO:0003677">
    <property type="term" value="F:DNA binding"/>
    <property type="evidence" value="ECO:0007669"/>
    <property type="project" value="InterPro"/>
</dbReference>
<dbReference type="HAMAP" id="MF_00797">
    <property type="entry name" value="UPF0335"/>
    <property type="match status" value="1"/>
</dbReference>
<dbReference type="InterPro" id="IPR018753">
    <property type="entry name" value="GapR-like"/>
</dbReference>
<dbReference type="InterPro" id="IPR046367">
    <property type="entry name" value="GapR-like_DNA-bd"/>
</dbReference>
<dbReference type="NCBIfam" id="NF010247">
    <property type="entry name" value="PRK13694.1"/>
    <property type="match status" value="1"/>
</dbReference>
<dbReference type="Pfam" id="PF10073">
    <property type="entry name" value="GapR_DNA-bd"/>
    <property type="match status" value="1"/>
</dbReference>